<organism>
    <name type="scientific">Mesoplasma florum (strain ATCC 33453 / NBRC 100688 / NCTC 11704 / L1)</name>
    <name type="common">Acholeplasma florum</name>
    <dbReference type="NCBI Taxonomy" id="265311"/>
    <lineage>
        <taxon>Bacteria</taxon>
        <taxon>Bacillati</taxon>
        <taxon>Mycoplasmatota</taxon>
        <taxon>Mollicutes</taxon>
        <taxon>Entomoplasmatales</taxon>
        <taxon>Entomoplasmataceae</taxon>
        <taxon>Mesoplasma</taxon>
    </lineage>
</organism>
<name>IF3_MESFL</name>
<comment type="function">
    <text evidence="1">IF-3 binds to the 30S ribosomal subunit and shifts the equilibrium between 70S ribosomes and their 50S and 30S subunits in favor of the free subunits, thus enhancing the availability of 30S subunits on which protein synthesis initiation begins.</text>
</comment>
<comment type="subunit">
    <text evidence="1">Monomer.</text>
</comment>
<comment type="subcellular location">
    <subcellularLocation>
        <location evidence="1">Cytoplasm</location>
    </subcellularLocation>
</comment>
<comment type="similarity">
    <text evidence="1">Belongs to the IF-3 family.</text>
</comment>
<feature type="chain" id="PRO_1000004543" description="Translation initiation factor IF-3">
    <location>
        <begin position="1"/>
        <end position="180"/>
    </location>
</feature>
<keyword id="KW-0963">Cytoplasm</keyword>
<keyword id="KW-0396">Initiation factor</keyword>
<keyword id="KW-0648">Protein biosynthesis</keyword>
<keyword id="KW-1185">Reference proteome</keyword>
<protein>
    <recommendedName>
        <fullName evidence="1">Translation initiation factor IF-3</fullName>
    </recommendedName>
</protein>
<reference key="1">
    <citation type="submission" date="2004-06" db="EMBL/GenBank/DDBJ databases">
        <authorList>
            <person name="Birren B.W."/>
            <person name="Stange-Thomann N."/>
            <person name="Hafez N."/>
            <person name="DeCaprio D."/>
            <person name="Fisher S."/>
            <person name="Butler J."/>
            <person name="Elkins T."/>
            <person name="Kodira C.D."/>
            <person name="Major J."/>
            <person name="Wang S."/>
            <person name="Nicol R."/>
            <person name="Nusbaum C."/>
        </authorList>
    </citation>
    <scope>NUCLEOTIDE SEQUENCE [LARGE SCALE GENOMIC DNA]</scope>
    <source>
        <strain>ATCC 33453 / NBRC 100688 / NCTC 11704 / L1</strain>
    </source>
</reference>
<sequence length="180" mass="20846">MDQRRNNSKPIKNQDPINAFIRAREVLIIGDNGEKLGPLKRNEAIQLAEEKGLDLMQVGQQPDGLAICKILDYGKFRYQQQKKNKEAKKNQVKVENKEIRLTVNIGQHDLVTKAKKAREFLEAGDRVKISLKFKGREIAYMDLGKETLDRFYKEIEDIAKIEKEAKLTSRFLDMYVVPKK</sequence>
<gene>
    <name evidence="1" type="primary">infC</name>
    <name type="ordered locus">Mfl188</name>
</gene>
<evidence type="ECO:0000255" key="1">
    <source>
        <dbReference type="HAMAP-Rule" id="MF_00080"/>
    </source>
</evidence>
<dbReference type="EMBL" id="AE017263">
    <property type="protein sequence ID" value="AAT75545.1"/>
    <property type="molecule type" value="Genomic_DNA"/>
</dbReference>
<dbReference type="RefSeq" id="WP_011183085.1">
    <property type="nucleotide sequence ID" value="NC_006055.1"/>
</dbReference>
<dbReference type="RefSeq" id="YP_053429.1">
    <property type="nucleotide sequence ID" value="NC_006055.1"/>
</dbReference>
<dbReference type="SMR" id="Q6F1S8"/>
<dbReference type="STRING" id="265311.Mfl188"/>
<dbReference type="PaxDb" id="265311-Mfl188"/>
<dbReference type="EnsemblBacteria" id="AAT75545">
    <property type="protein sequence ID" value="AAT75545"/>
    <property type="gene ID" value="Mfl188"/>
</dbReference>
<dbReference type="GeneID" id="2898202"/>
<dbReference type="KEGG" id="mfl:Mfl188"/>
<dbReference type="PATRIC" id="fig|265311.5.peg.189"/>
<dbReference type="eggNOG" id="COG0290">
    <property type="taxonomic scope" value="Bacteria"/>
</dbReference>
<dbReference type="HOGENOM" id="CLU_054919_3_2_14"/>
<dbReference type="OrthoDB" id="9806014at2"/>
<dbReference type="Proteomes" id="UP000006647">
    <property type="component" value="Chromosome"/>
</dbReference>
<dbReference type="GO" id="GO:0005829">
    <property type="term" value="C:cytosol"/>
    <property type="evidence" value="ECO:0007669"/>
    <property type="project" value="TreeGrafter"/>
</dbReference>
<dbReference type="GO" id="GO:0016020">
    <property type="term" value="C:membrane"/>
    <property type="evidence" value="ECO:0007669"/>
    <property type="project" value="TreeGrafter"/>
</dbReference>
<dbReference type="GO" id="GO:0043022">
    <property type="term" value="F:ribosome binding"/>
    <property type="evidence" value="ECO:0007669"/>
    <property type="project" value="TreeGrafter"/>
</dbReference>
<dbReference type="GO" id="GO:0003743">
    <property type="term" value="F:translation initiation factor activity"/>
    <property type="evidence" value="ECO:0007669"/>
    <property type="project" value="UniProtKB-UniRule"/>
</dbReference>
<dbReference type="GO" id="GO:0032790">
    <property type="term" value="P:ribosome disassembly"/>
    <property type="evidence" value="ECO:0007669"/>
    <property type="project" value="TreeGrafter"/>
</dbReference>
<dbReference type="Gene3D" id="3.30.110.10">
    <property type="entry name" value="Translation initiation factor 3 (IF-3), C-terminal domain"/>
    <property type="match status" value="1"/>
</dbReference>
<dbReference type="Gene3D" id="3.10.20.80">
    <property type="entry name" value="Translation initiation factor 3 (IF-3), N-terminal domain"/>
    <property type="match status" value="1"/>
</dbReference>
<dbReference type="HAMAP" id="MF_00080">
    <property type="entry name" value="IF_3"/>
    <property type="match status" value="1"/>
</dbReference>
<dbReference type="InterPro" id="IPR036788">
    <property type="entry name" value="T_IF-3_C_sf"/>
</dbReference>
<dbReference type="InterPro" id="IPR036787">
    <property type="entry name" value="T_IF-3_N_sf"/>
</dbReference>
<dbReference type="InterPro" id="IPR019813">
    <property type="entry name" value="Translation_initiation_fac3_CS"/>
</dbReference>
<dbReference type="InterPro" id="IPR001288">
    <property type="entry name" value="Translation_initiation_fac_3"/>
</dbReference>
<dbReference type="InterPro" id="IPR019815">
    <property type="entry name" value="Translation_initiation_fac_3_C"/>
</dbReference>
<dbReference type="InterPro" id="IPR019814">
    <property type="entry name" value="Translation_initiation_fac_3_N"/>
</dbReference>
<dbReference type="NCBIfam" id="TIGR00168">
    <property type="entry name" value="infC"/>
    <property type="match status" value="1"/>
</dbReference>
<dbReference type="PANTHER" id="PTHR10938">
    <property type="entry name" value="TRANSLATION INITIATION FACTOR IF-3"/>
    <property type="match status" value="1"/>
</dbReference>
<dbReference type="PANTHER" id="PTHR10938:SF0">
    <property type="entry name" value="TRANSLATION INITIATION FACTOR IF-3, MITOCHONDRIAL"/>
    <property type="match status" value="1"/>
</dbReference>
<dbReference type="Pfam" id="PF00707">
    <property type="entry name" value="IF3_C"/>
    <property type="match status" value="1"/>
</dbReference>
<dbReference type="Pfam" id="PF05198">
    <property type="entry name" value="IF3_N"/>
    <property type="match status" value="1"/>
</dbReference>
<dbReference type="SUPFAM" id="SSF55200">
    <property type="entry name" value="Translation initiation factor IF3, C-terminal domain"/>
    <property type="match status" value="1"/>
</dbReference>
<dbReference type="SUPFAM" id="SSF54364">
    <property type="entry name" value="Translation initiation factor IF3, N-terminal domain"/>
    <property type="match status" value="1"/>
</dbReference>
<dbReference type="PROSITE" id="PS00938">
    <property type="entry name" value="IF3"/>
    <property type="match status" value="1"/>
</dbReference>
<proteinExistence type="inferred from homology"/>
<accession>Q6F1S8</accession>